<accession>P41534</accession>
<accession>Q53WW0</accession>
<comment type="function">
    <molecule>Growth hormone-releasing factor 1-46</molecule>
    <text>Primary role of GRF is to release GH from the pituitary.</text>
</comment>
<comment type="function">
    <text evidence="1 2 3">PACAP is a neuropeptide involved in diverse array of physiological processes through activating the PACAP subfamily of class B1 G protein-coupled receptors: VIP receptor 1 (VIPR1), VIP receptor 2 (VIPR2), and PACAP type I receptor (ADCYAP1R1). Exerts neuroprotective and general cytoprotective effects due to anti-apoptotic, anti-inflammatory, and antioxidant actions. Promotes neuron projection development through the RAPGEF2/Rap1/B-Raf/ERK pathway (By similarity). In chromaffin cells, induces long-lasting increase of intracellular calcium concentrations and neuroendocrine secretion (By similarity). Involved in the control of glucose homeostasis, induces insulin secretion by pancreatic beta cells (By similarity). PACAP exists in two bioactive forms from proteolysis of the same precursor protein, PACAP27 and PACAP38, which differ by eleven amino acid residues in the C-terminus (By similarity).</text>
</comment>
<comment type="subcellular location">
    <subcellularLocation>
        <location>Secreted</location>
    </subcellularLocation>
</comment>
<comment type="alternative products">
    <event type="alternative splicing"/>
    <isoform>
        <id>P41534-1</id>
        <name>GRF 1-46</name>
        <sequence type="displayed"/>
    </isoform>
    <isoform>
        <id>P41534-2</id>
        <name>GRF 1-43</name>
        <sequence type="described" ref="VSP_001760"/>
    </isoform>
    <isoform>
        <id>P41534-3</id>
        <name>GRF 33-46</name>
        <sequence type="described" ref="VSP_001759"/>
    </isoform>
</comment>
<comment type="similarity">
    <text evidence="6">Belongs to the glucagon family.</text>
</comment>
<feature type="signal peptide" evidence="4">
    <location>
        <begin position="1"/>
        <end position="23"/>
    </location>
</feature>
<feature type="propeptide" id="PRO_0000011511">
    <location>
        <begin position="24"/>
        <end position="80"/>
    </location>
</feature>
<feature type="peptide" id="PRO_0000011512" description="Growth hormone-releasing factor 1-46">
    <location>
        <begin position="83"/>
        <end position="128"/>
    </location>
</feature>
<feature type="peptide" id="PRO_0000011513" description="Pituitary adenylate cyclase-activating polypeptide 38">
    <location>
        <begin position="131"/>
        <end position="168"/>
    </location>
</feature>
<feature type="peptide" id="PRO_0000011514" description="Pituitary adenylate cyclase-activating polypeptide 27">
    <location>
        <begin position="131"/>
        <end position="157"/>
    </location>
</feature>
<feature type="propeptide" id="PRO_0000011515">
    <location>
        <begin position="172"/>
        <end position="175"/>
    </location>
</feature>
<feature type="region of interest" description="Important for receptor binding" evidence="3">
    <location>
        <begin position="149"/>
        <end position="157"/>
    </location>
</feature>
<feature type="modified residue" description="Leucine amide" evidence="5">
    <location>
        <position position="157"/>
    </location>
</feature>
<feature type="modified residue" description="Lysine amide" evidence="5">
    <location>
        <position position="168"/>
    </location>
</feature>
<feature type="splice variant" id="VSP_001759" description="In isoform GRF 33-46." evidence="6">
    <original>RHADGIFSKAYRKLLGQLSARNYLHSLMAKRVG</original>
    <variation>S</variation>
    <location>
        <begin position="82"/>
        <end position="114"/>
    </location>
</feature>
<feature type="splice variant" id="VSP_001760" description="In isoform GRF 1-43." evidence="6">
    <location>
        <begin position="115"/>
        <end position="117"/>
    </location>
</feature>
<keyword id="KW-0025">Alternative splicing</keyword>
<keyword id="KW-0027">Amidation</keyword>
<keyword id="KW-0165">Cleavage on pair of basic residues</keyword>
<keyword id="KW-0903">Direct protein sequencing</keyword>
<keyword id="KW-0372">Hormone</keyword>
<keyword id="KW-1185">Reference proteome</keyword>
<keyword id="KW-0964">Secreted</keyword>
<keyword id="KW-0732">Signal</keyword>
<gene>
    <name type="primary">ADCYAP1</name>
</gene>
<dbReference type="EMBL" id="U71183">
    <property type="protein sequence ID" value="AAB51200.1"/>
    <property type="molecule type" value="mRNA"/>
</dbReference>
<dbReference type="EMBL" id="U71184">
    <property type="protein sequence ID" value="AAB51201.1"/>
    <property type="molecule type" value="mRNA"/>
</dbReference>
<dbReference type="EMBL" id="U71185">
    <property type="protein sequence ID" value="AAB51202.1"/>
    <property type="molecule type" value="mRNA"/>
</dbReference>
<dbReference type="EMBL" id="U67275">
    <property type="protein sequence ID" value="AAC64494.1"/>
    <property type="molecule type" value="Genomic_DNA"/>
</dbReference>
<dbReference type="PIR" id="A61070">
    <property type="entry name" value="A61070"/>
</dbReference>
<dbReference type="SMR" id="P41534"/>
<dbReference type="FunCoup" id="P41534">
    <property type="interactions" value="155"/>
</dbReference>
<dbReference type="STRING" id="9031.ENSGALP00000062803"/>
<dbReference type="VEuPathDB" id="HostDB:geneid_408251"/>
<dbReference type="InParanoid" id="P41534"/>
<dbReference type="OrthoDB" id="9875627at2759"/>
<dbReference type="PhylomeDB" id="P41534"/>
<dbReference type="Proteomes" id="UP000000539">
    <property type="component" value="Unassembled WGS sequence"/>
</dbReference>
<dbReference type="GO" id="GO:0044297">
    <property type="term" value="C:cell body"/>
    <property type="evidence" value="ECO:0000314"/>
    <property type="project" value="AgBase"/>
</dbReference>
<dbReference type="GO" id="GO:0070852">
    <property type="term" value="C:cell body fiber"/>
    <property type="evidence" value="ECO:0000314"/>
    <property type="project" value="AgBase"/>
</dbReference>
<dbReference type="GO" id="GO:0005576">
    <property type="term" value="C:extracellular region"/>
    <property type="evidence" value="ECO:0007669"/>
    <property type="project" value="UniProtKB-SubCell"/>
</dbReference>
<dbReference type="GO" id="GO:0043005">
    <property type="term" value="C:neuron projection"/>
    <property type="evidence" value="ECO:0000314"/>
    <property type="project" value="AgBase"/>
</dbReference>
<dbReference type="GO" id="GO:0043204">
    <property type="term" value="C:perikaryon"/>
    <property type="evidence" value="ECO:0000314"/>
    <property type="project" value="AgBase"/>
</dbReference>
<dbReference type="GO" id="GO:0005184">
    <property type="term" value="F:neuropeptide hormone activity"/>
    <property type="evidence" value="ECO:0000250"/>
    <property type="project" value="UniProtKB"/>
</dbReference>
<dbReference type="GO" id="GO:0051428">
    <property type="term" value="F:peptide hormone receptor binding"/>
    <property type="evidence" value="ECO:0000318"/>
    <property type="project" value="GO_Central"/>
</dbReference>
<dbReference type="GO" id="GO:0016521">
    <property type="term" value="F:pituitary adenylate cyclase activating polypeptide activity"/>
    <property type="evidence" value="ECO:0000250"/>
    <property type="project" value="UniProtKB"/>
</dbReference>
<dbReference type="GO" id="GO:0031891">
    <property type="term" value="F:type 1 vasoactive intestinal polypeptide receptor binding"/>
    <property type="evidence" value="ECO:0000250"/>
    <property type="project" value="UniProtKB"/>
</dbReference>
<dbReference type="GO" id="GO:0031892">
    <property type="term" value="F:type 2 vasoactive intestinal polypeptide receptor binding"/>
    <property type="evidence" value="ECO:0000250"/>
    <property type="project" value="UniProtKB"/>
</dbReference>
<dbReference type="GO" id="GO:0007189">
    <property type="term" value="P:adenylate cyclase-activating G protein-coupled receptor signaling pathway"/>
    <property type="evidence" value="ECO:0000250"/>
    <property type="project" value="UniProtKB"/>
</dbReference>
<dbReference type="GO" id="GO:0030073">
    <property type="term" value="P:insulin secretion"/>
    <property type="evidence" value="ECO:0000250"/>
    <property type="project" value="UniProtKB"/>
</dbReference>
<dbReference type="GO" id="GO:0031175">
    <property type="term" value="P:neuron projection development"/>
    <property type="evidence" value="ECO:0000318"/>
    <property type="project" value="GO_Central"/>
</dbReference>
<dbReference type="GO" id="GO:0007218">
    <property type="term" value="P:neuropeptide signaling pathway"/>
    <property type="evidence" value="ECO:0000318"/>
    <property type="project" value="GO_Central"/>
</dbReference>
<dbReference type="GO" id="GO:0007204">
    <property type="term" value="P:positive regulation of cytosolic calcium ion concentration"/>
    <property type="evidence" value="ECO:0000250"/>
    <property type="project" value="UniProtKB"/>
</dbReference>
<dbReference type="GO" id="GO:0070374">
    <property type="term" value="P:positive regulation of ERK1 and ERK2 cascade"/>
    <property type="evidence" value="ECO:0000318"/>
    <property type="project" value="GO_Central"/>
</dbReference>
<dbReference type="GO" id="GO:0010628">
    <property type="term" value="P:positive regulation of gene expression"/>
    <property type="evidence" value="ECO:0000250"/>
    <property type="project" value="UniProtKB"/>
</dbReference>
<dbReference type="GO" id="GO:0060124">
    <property type="term" value="P:positive regulation of growth hormone secretion"/>
    <property type="evidence" value="ECO:0000250"/>
    <property type="project" value="UniProtKB"/>
</dbReference>
<dbReference type="GO" id="GO:0032880">
    <property type="term" value="P:regulation of protein localization"/>
    <property type="evidence" value="ECO:0000318"/>
    <property type="project" value="GO_Central"/>
</dbReference>
<dbReference type="InterPro" id="IPR000532">
    <property type="entry name" value="Glucagon_GIP_secretin_VIP"/>
</dbReference>
<dbReference type="InterPro" id="IPR046963">
    <property type="entry name" value="VIP/GHRH-like"/>
</dbReference>
<dbReference type="PANTHER" id="PTHR11213">
    <property type="entry name" value="GLUCAGON-FAMILY NEUROPEPTIDE"/>
    <property type="match status" value="1"/>
</dbReference>
<dbReference type="PANTHER" id="PTHR11213:SF1">
    <property type="entry name" value="PITUITARY ADENYLATE CYCLASE-ACTIVATING POLYPEPTIDE"/>
    <property type="match status" value="1"/>
</dbReference>
<dbReference type="Pfam" id="PF00123">
    <property type="entry name" value="Hormone_2"/>
    <property type="match status" value="2"/>
</dbReference>
<dbReference type="SMART" id="SM00070">
    <property type="entry name" value="GLUCA"/>
    <property type="match status" value="2"/>
</dbReference>
<dbReference type="PROSITE" id="PS00260">
    <property type="entry name" value="GLUCAGON"/>
    <property type="match status" value="2"/>
</dbReference>
<name>PACA_CHICK</name>
<protein>
    <recommendedName>
        <fullName>Glucagon family neuropeptides</fullName>
    </recommendedName>
    <component>
        <recommendedName>
            <fullName>Growth hormone-releasing factor 1-46</fullName>
            <shortName>GRF</shortName>
        </recommendedName>
        <alternativeName>
            <fullName>Growth hormone-releasing hormone</fullName>
            <shortName>GHRH</shortName>
        </alternativeName>
    </component>
    <component>
        <recommendedName>
            <fullName>Pituitary adenylate cyclase-activating polypeptide 27</fullName>
            <shortName>PACAP-27</shortName>
            <shortName>PACAP27</shortName>
        </recommendedName>
    </component>
    <component>
        <recommendedName>
            <fullName>Pituitary adenylate cyclase-activating polypeptide 38</fullName>
            <shortName>PACAP-38</shortName>
            <shortName>PACAP38</shortName>
        </recommendedName>
    </component>
</protein>
<proteinExistence type="evidence at protein level"/>
<organism>
    <name type="scientific">Gallus gallus</name>
    <name type="common">Chicken</name>
    <dbReference type="NCBI Taxonomy" id="9031"/>
    <lineage>
        <taxon>Eukaryota</taxon>
        <taxon>Metazoa</taxon>
        <taxon>Chordata</taxon>
        <taxon>Craniata</taxon>
        <taxon>Vertebrata</taxon>
        <taxon>Euteleostomi</taxon>
        <taxon>Archelosauria</taxon>
        <taxon>Archosauria</taxon>
        <taxon>Dinosauria</taxon>
        <taxon>Saurischia</taxon>
        <taxon>Theropoda</taxon>
        <taxon>Coelurosauria</taxon>
        <taxon>Aves</taxon>
        <taxon>Neognathae</taxon>
        <taxon>Galloanserae</taxon>
        <taxon>Galliformes</taxon>
        <taxon>Phasianidae</taxon>
        <taxon>Phasianinae</taxon>
        <taxon>Gallus</taxon>
    </lineage>
</organism>
<sequence>MSGNVYKTLLTLLVYGLIMHCNVYCSPDRWTPVPGAKLEEEVYDEDGNTLQDFALRAGAPGGGGPRPRWGRCTALYYPPGKRHADGIFSKAYRKLLGQLSARNYLHSLMAKRVGGASSGLGDEAEPLSKRHIDGIFTDSYSRYRKQMAVKKYLAAVLGKRYKQRVKNKGRRVAYL</sequence>
<evidence type="ECO:0000250" key="1">
    <source>
        <dbReference type="UniProtKB" id="O70176"/>
    </source>
</evidence>
<evidence type="ECO:0000250" key="2">
    <source>
        <dbReference type="UniProtKB" id="P13589"/>
    </source>
</evidence>
<evidence type="ECO:0000250" key="3">
    <source>
        <dbReference type="UniProtKB" id="P18509"/>
    </source>
</evidence>
<evidence type="ECO:0000255" key="4"/>
<evidence type="ECO:0000269" key="5">
    <source ref="2"/>
</evidence>
<evidence type="ECO:0000305" key="6"/>
<reference key="1">
    <citation type="journal article" date="1997" name="DNA Cell Biol.">
        <title>Expression and alternative processing of a chicken gene encoding both growth hormone-releasing hormone and pituitary adenylate cyclase-activating polypeptide.</title>
        <authorList>
            <person name="McRory J.E."/>
            <person name="Parker R.L."/>
            <person name="Sherwood N.M."/>
        </authorList>
    </citation>
    <scope>NUCLEOTIDE SEQUENCE [GENOMIC DNA / MRNA]</scope>
    <scope>FUNCTION</scope>
</reference>
<reference key="2">
    <citation type="journal article" date="1992" name="Regul. Pept.">
        <title>Isolation and primary structure of chicken PACAP.</title>
        <authorList>
            <person name="Yasuhara T."/>
            <person name="Mizuno K."/>
            <person name="Somogyvari-Vigh A."/>
            <person name="Komaki G."/>
            <person name="Arimura A."/>
        </authorList>
    </citation>
    <scope>PROTEIN SEQUENCE OF 131-168</scope>
    <scope>AMIDATION AT LEU-157 AND LYS-168</scope>
</reference>